<sequence length="59" mass="6514">MFAGLPSLSHEQQQKAVERIQELMSQGMSSGEAIAQVAGELRANHTGERIVARFEDEDE</sequence>
<dbReference type="EMBL" id="CP001127">
    <property type="protein sequence ID" value="ACF90499.1"/>
    <property type="molecule type" value="Genomic_DNA"/>
</dbReference>
<dbReference type="RefSeq" id="WP_000457328.1">
    <property type="nucleotide sequence ID" value="NC_011094.1"/>
</dbReference>
<dbReference type="SMR" id="B4TXZ4"/>
<dbReference type="KEGG" id="sew:SeSA_A1967"/>
<dbReference type="HOGENOM" id="CLU_185263_0_0_6"/>
<dbReference type="Proteomes" id="UP000001865">
    <property type="component" value="Chromosome"/>
</dbReference>
<dbReference type="HAMAP" id="MF_00507">
    <property type="entry name" value="UPF0181"/>
    <property type="match status" value="1"/>
</dbReference>
<dbReference type="InterPro" id="IPR005371">
    <property type="entry name" value="UPF0181"/>
</dbReference>
<dbReference type="NCBIfam" id="NF003476">
    <property type="entry name" value="PRK05114.1"/>
    <property type="match status" value="1"/>
</dbReference>
<dbReference type="Pfam" id="PF03701">
    <property type="entry name" value="UPF0181"/>
    <property type="match status" value="1"/>
</dbReference>
<organism>
    <name type="scientific">Salmonella schwarzengrund (strain CVM19633)</name>
    <dbReference type="NCBI Taxonomy" id="439843"/>
    <lineage>
        <taxon>Bacteria</taxon>
        <taxon>Pseudomonadati</taxon>
        <taxon>Pseudomonadota</taxon>
        <taxon>Gammaproteobacteria</taxon>
        <taxon>Enterobacterales</taxon>
        <taxon>Enterobacteriaceae</taxon>
        <taxon>Salmonella</taxon>
    </lineage>
</organism>
<reference key="1">
    <citation type="journal article" date="2011" name="J. Bacteriol.">
        <title>Comparative genomics of 28 Salmonella enterica isolates: evidence for CRISPR-mediated adaptive sublineage evolution.</title>
        <authorList>
            <person name="Fricke W.F."/>
            <person name="Mammel M.K."/>
            <person name="McDermott P.F."/>
            <person name="Tartera C."/>
            <person name="White D.G."/>
            <person name="Leclerc J.E."/>
            <person name="Ravel J."/>
            <person name="Cebula T.A."/>
        </authorList>
    </citation>
    <scope>NUCLEOTIDE SEQUENCE [LARGE SCALE GENOMIC DNA]</scope>
    <source>
        <strain>CVM19633</strain>
    </source>
</reference>
<accession>B4TXZ4</accession>
<comment type="similarity">
    <text evidence="1">Belongs to the UPF0181 family.</text>
</comment>
<gene>
    <name evidence="1" type="primary">yoaH</name>
    <name type="ordered locus">SeSA_A1967</name>
</gene>
<proteinExistence type="inferred from homology"/>
<evidence type="ECO:0000255" key="1">
    <source>
        <dbReference type="HAMAP-Rule" id="MF_00507"/>
    </source>
</evidence>
<feature type="chain" id="PRO_1000127060" description="UPF0181 protein YoaH">
    <location>
        <begin position="1"/>
        <end position="59"/>
    </location>
</feature>
<name>YOAH_SALSV</name>
<protein>
    <recommendedName>
        <fullName evidence="1">UPF0181 protein YoaH</fullName>
    </recommendedName>
</protein>